<evidence type="ECO:0000255" key="1">
    <source>
        <dbReference type="HAMAP-Rule" id="MF_00059"/>
    </source>
</evidence>
<feature type="chain" id="PRO_0000225306" description="DNA-directed RNA polymerase subunit alpha">
    <location>
        <begin position="1"/>
        <end position="312"/>
    </location>
</feature>
<feature type="region of interest" description="Alpha N-terminal domain (alpha-NTD)" evidence="1">
    <location>
        <begin position="1"/>
        <end position="226"/>
    </location>
</feature>
<feature type="region of interest" description="Alpha C-terminal domain (alpha-CTD)" evidence="1">
    <location>
        <begin position="242"/>
        <end position="312"/>
    </location>
</feature>
<keyword id="KW-0240">DNA-directed RNA polymerase</keyword>
<keyword id="KW-0548">Nucleotidyltransferase</keyword>
<keyword id="KW-0804">Transcription</keyword>
<keyword id="KW-0808">Transferase</keyword>
<gene>
    <name evidence="1" type="primary">rpoA</name>
    <name type="ordered locus">M28_Spy0069</name>
</gene>
<protein>
    <recommendedName>
        <fullName evidence="1">DNA-directed RNA polymerase subunit alpha</fullName>
        <shortName evidence="1">RNAP subunit alpha</shortName>
        <ecNumber evidence="1">2.7.7.6</ecNumber>
    </recommendedName>
    <alternativeName>
        <fullName evidence="1">RNA polymerase subunit alpha</fullName>
    </alternativeName>
    <alternativeName>
        <fullName evidence="1">Transcriptase subunit alpha</fullName>
    </alternativeName>
</protein>
<reference key="1">
    <citation type="journal article" date="2005" name="J. Infect. Dis.">
        <title>Genome sequence of a serotype M28 strain of group A Streptococcus: potential new insights into puerperal sepsis and bacterial disease specificity.</title>
        <authorList>
            <person name="Green N.M."/>
            <person name="Zhang S."/>
            <person name="Porcella S.F."/>
            <person name="Nagiec M.J."/>
            <person name="Barbian K.D."/>
            <person name="Beres S.B."/>
            <person name="Lefebvre R.B."/>
            <person name="Musser J.M."/>
        </authorList>
    </citation>
    <scope>NUCLEOTIDE SEQUENCE [LARGE SCALE GENOMIC DNA]</scope>
    <source>
        <strain>MGAS6180</strain>
    </source>
</reference>
<proteinExistence type="inferred from homology"/>
<comment type="function">
    <text evidence="1">DNA-dependent RNA polymerase catalyzes the transcription of DNA into RNA using the four ribonucleoside triphosphates as substrates.</text>
</comment>
<comment type="catalytic activity">
    <reaction evidence="1">
        <text>RNA(n) + a ribonucleoside 5'-triphosphate = RNA(n+1) + diphosphate</text>
        <dbReference type="Rhea" id="RHEA:21248"/>
        <dbReference type="Rhea" id="RHEA-COMP:14527"/>
        <dbReference type="Rhea" id="RHEA-COMP:17342"/>
        <dbReference type="ChEBI" id="CHEBI:33019"/>
        <dbReference type="ChEBI" id="CHEBI:61557"/>
        <dbReference type="ChEBI" id="CHEBI:140395"/>
        <dbReference type="EC" id="2.7.7.6"/>
    </reaction>
</comment>
<comment type="subunit">
    <text evidence="1">Homodimer. The RNAP catalytic core consists of 2 alpha, 1 beta, 1 beta' and 1 omega subunit. When a sigma factor is associated with the core the holoenzyme is formed, which can initiate transcription.</text>
</comment>
<comment type="domain">
    <text evidence="1">The N-terminal domain is essential for RNAP assembly and basal transcription, whereas the C-terminal domain is involved in interaction with transcriptional regulators and with upstream promoter elements.</text>
</comment>
<comment type="similarity">
    <text evidence="1">Belongs to the RNA polymerase alpha chain family.</text>
</comment>
<organism>
    <name type="scientific">Streptococcus pyogenes serotype M28 (strain MGAS6180)</name>
    <dbReference type="NCBI Taxonomy" id="319701"/>
    <lineage>
        <taxon>Bacteria</taxon>
        <taxon>Bacillati</taxon>
        <taxon>Bacillota</taxon>
        <taxon>Bacilli</taxon>
        <taxon>Lactobacillales</taxon>
        <taxon>Streptococcaceae</taxon>
        <taxon>Streptococcus</taxon>
    </lineage>
</organism>
<dbReference type="EC" id="2.7.7.6" evidence="1"/>
<dbReference type="EMBL" id="CP000056">
    <property type="protein sequence ID" value="AAX71183.1"/>
    <property type="molecule type" value="Genomic_DNA"/>
</dbReference>
<dbReference type="RefSeq" id="WP_002986607.1">
    <property type="nucleotide sequence ID" value="NC_007296.2"/>
</dbReference>
<dbReference type="SMR" id="Q48VS3"/>
<dbReference type="KEGG" id="spb:M28_Spy0069"/>
<dbReference type="HOGENOM" id="CLU_053084_0_1_9"/>
<dbReference type="GO" id="GO:0005737">
    <property type="term" value="C:cytoplasm"/>
    <property type="evidence" value="ECO:0007669"/>
    <property type="project" value="UniProtKB-ARBA"/>
</dbReference>
<dbReference type="GO" id="GO:0000428">
    <property type="term" value="C:DNA-directed RNA polymerase complex"/>
    <property type="evidence" value="ECO:0007669"/>
    <property type="project" value="UniProtKB-KW"/>
</dbReference>
<dbReference type="GO" id="GO:0003677">
    <property type="term" value="F:DNA binding"/>
    <property type="evidence" value="ECO:0007669"/>
    <property type="project" value="UniProtKB-UniRule"/>
</dbReference>
<dbReference type="GO" id="GO:0003899">
    <property type="term" value="F:DNA-directed RNA polymerase activity"/>
    <property type="evidence" value="ECO:0007669"/>
    <property type="project" value="UniProtKB-UniRule"/>
</dbReference>
<dbReference type="GO" id="GO:0046983">
    <property type="term" value="F:protein dimerization activity"/>
    <property type="evidence" value="ECO:0007669"/>
    <property type="project" value="InterPro"/>
</dbReference>
<dbReference type="GO" id="GO:0006351">
    <property type="term" value="P:DNA-templated transcription"/>
    <property type="evidence" value="ECO:0007669"/>
    <property type="project" value="UniProtKB-UniRule"/>
</dbReference>
<dbReference type="CDD" id="cd06928">
    <property type="entry name" value="RNAP_alpha_NTD"/>
    <property type="match status" value="1"/>
</dbReference>
<dbReference type="FunFam" id="1.10.150.20:FF:000001">
    <property type="entry name" value="DNA-directed RNA polymerase subunit alpha"/>
    <property type="match status" value="1"/>
</dbReference>
<dbReference type="FunFam" id="2.170.120.12:FF:000001">
    <property type="entry name" value="DNA-directed RNA polymerase subunit alpha"/>
    <property type="match status" value="1"/>
</dbReference>
<dbReference type="Gene3D" id="1.10.150.20">
    <property type="entry name" value="5' to 3' exonuclease, C-terminal subdomain"/>
    <property type="match status" value="1"/>
</dbReference>
<dbReference type="Gene3D" id="2.170.120.12">
    <property type="entry name" value="DNA-directed RNA polymerase, insert domain"/>
    <property type="match status" value="1"/>
</dbReference>
<dbReference type="Gene3D" id="3.30.1360.10">
    <property type="entry name" value="RNA polymerase, RBP11-like subunit"/>
    <property type="match status" value="1"/>
</dbReference>
<dbReference type="HAMAP" id="MF_00059">
    <property type="entry name" value="RNApol_bact_RpoA"/>
    <property type="match status" value="1"/>
</dbReference>
<dbReference type="InterPro" id="IPR011262">
    <property type="entry name" value="DNA-dir_RNA_pol_insert"/>
</dbReference>
<dbReference type="InterPro" id="IPR011263">
    <property type="entry name" value="DNA-dir_RNA_pol_RpoA/D/Rpb3"/>
</dbReference>
<dbReference type="InterPro" id="IPR011773">
    <property type="entry name" value="DNA-dir_RpoA"/>
</dbReference>
<dbReference type="InterPro" id="IPR036603">
    <property type="entry name" value="RBP11-like"/>
</dbReference>
<dbReference type="InterPro" id="IPR011260">
    <property type="entry name" value="RNAP_asu_C"/>
</dbReference>
<dbReference type="InterPro" id="IPR036643">
    <property type="entry name" value="RNApol_insert_sf"/>
</dbReference>
<dbReference type="NCBIfam" id="NF003513">
    <property type="entry name" value="PRK05182.1-2"/>
    <property type="match status" value="1"/>
</dbReference>
<dbReference type="NCBIfam" id="NF003515">
    <property type="entry name" value="PRK05182.2-1"/>
    <property type="match status" value="1"/>
</dbReference>
<dbReference type="NCBIfam" id="NF003518">
    <property type="entry name" value="PRK05182.2-4"/>
    <property type="match status" value="1"/>
</dbReference>
<dbReference type="NCBIfam" id="NF003519">
    <property type="entry name" value="PRK05182.2-5"/>
    <property type="match status" value="1"/>
</dbReference>
<dbReference type="NCBIfam" id="TIGR02027">
    <property type="entry name" value="rpoA"/>
    <property type="match status" value="1"/>
</dbReference>
<dbReference type="Pfam" id="PF01000">
    <property type="entry name" value="RNA_pol_A_bac"/>
    <property type="match status" value="1"/>
</dbReference>
<dbReference type="Pfam" id="PF03118">
    <property type="entry name" value="RNA_pol_A_CTD"/>
    <property type="match status" value="1"/>
</dbReference>
<dbReference type="Pfam" id="PF01193">
    <property type="entry name" value="RNA_pol_L"/>
    <property type="match status" value="1"/>
</dbReference>
<dbReference type="SMART" id="SM00662">
    <property type="entry name" value="RPOLD"/>
    <property type="match status" value="1"/>
</dbReference>
<dbReference type="SUPFAM" id="SSF47789">
    <property type="entry name" value="C-terminal domain of RNA polymerase alpha subunit"/>
    <property type="match status" value="1"/>
</dbReference>
<dbReference type="SUPFAM" id="SSF56553">
    <property type="entry name" value="Insert subdomain of RNA polymerase alpha subunit"/>
    <property type="match status" value="1"/>
</dbReference>
<dbReference type="SUPFAM" id="SSF55257">
    <property type="entry name" value="RBP11-like subunits of RNA polymerase"/>
    <property type="match status" value="1"/>
</dbReference>
<sequence length="312" mass="34530">MIEFEKPIITKIDENKDYGRFVIEPLERGYGTTLGNSLRRVLLSSLPGAAVTSIKIDGVLHEFDTIPGVREDVMQIILNVKGLAVKSYVEDEKIIELEVEGPAEVTAGDILTDSDIELVNPDHYLFTIAEGHSLRATMTVAKKRGYVPAEGNKKDDAPVGTLAVDSIYTPVKKVNYQVEPARVGSNDGFDKLTIEIMTNGTIIPEDALGLSARVLIEHLNLFTDLTEVAKATEVMKETEKVNDEKVLDRTIEELDLSVRSYNCLKRAGINTVFDLTEKSEPEMMKVRNLGRKSLEEVKVKLADLGLGLKNDK</sequence>
<name>RPOA_STRPM</name>
<accession>Q48VS3</accession>